<comment type="function">
    <text evidence="1">Tetrapolymerization of the monopyrrole PBG into the hydroxymethylbilane pre-uroporphyrinogen in several discrete steps.</text>
</comment>
<comment type="catalytic activity">
    <reaction evidence="1">
        <text>4 porphobilinogen + H2O = hydroxymethylbilane + 4 NH4(+)</text>
        <dbReference type="Rhea" id="RHEA:13185"/>
        <dbReference type="ChEBI" id="CHEBI:15377"/>
        <dbReference type="ChEBI" id="CHEBI:28938"/>
        <dbReference type="ChEBI" id="CHEBI:57845"/>
        <dbReference type="ChEBI" id="CHEBI:58126"/>
        <dbReference type="EC" id="2.5.1.61"/>
    </reaction>
</comment>
<comment type="cofactor">
    <cofactor evidence="1">
        <name>dipyrromethane</name>
        <dbReference type="ChEBI" id="CHEBI:60342"/>
    </cofactor>
    <text evidence="1">Binds 1 dipyrromethane group covalently.</text>
</comment>
<comment type="pathway">
    <text evidence="1">Porphyrin-containing compound metabolism; protoporphyrin-IX biosynthesis; coproporphyrinogen-III from 5-aminolevulinate: step 2/4.</text>
</comment>
<comment type="miscellaneous">
    <text evidence="1">The porphobilinogen subunits are added to the dipyrromethane group.</text>
</comment>
<comment type="similarity">
    <text evidence="1">Belongs to the HMBS family.</text>
</comment>
<gene>
    <name evidence="1" type="primary">hemC</name>
    <name type="ordered locus">Igni_0684</name>
</gene>
<evidence type="ECO:0000255" key="1">
    <source>
        <dbReference type="HAMAP-Rule" id="MF_00260"/>
    </source>
</evidence>
<reference key="1">
    <citation type="journal article" date="2008" name="Genome Biol.">
        <title>A genomic analysis of the archaeal system Ignicoccus hospitalis-Nanoarchaeum equitans.</title>
        <authorList>
            <person name="Podar M."/>
            <person name="Anderson I."/>
            <person name="Makarova K.S."/>
            <person name="Elkins J.G."/>
            <person name="Ivanova N."/>
            <person name="Wall M.A."/>
            <person name="Lykidis A."/>
            <person name="Mavromatis K."/>
            <person name="Sun H."/>
            <person name="Hudson M.E."/>
            <person name="Chen W."/>
            <person name="Deciu C."/>
            <person name="Hutchison D."/>
            <person name="Eads J.R."/>
            <person name="Anderson A."/>
            <person name="Fernandes F."/>
            <person name="Szeto E."/>
            <person name="Lapidus A."/>
            <person name="Kyrpides N.C."/>
            <person name="Saier M.H. Jr."/>
            <person name="Richardson P.M."/>
            <person name="Rachel R."/>
            <person name="Huber H."/>
            <person name="Eisen J.A."/>
            <person name="Koonin E.V."/>
            <person name="Keller M."/>
            <person name="Stetter K.O."/>
        </authorList>
    </citation>
    <scope>NUCLEOTIDE SEQUENCE [LARGE SCALE GENOMIC DNA]</scope>
    <source>
        <strain>KIN4/I / DSM 18386 / JCM 14125</strain>
    </source>
</reference>
<organism>
    <name type="scientific">Ignicoccus hospitalis (strain KIN4/I / DSM 18386 / JCM 14125)</name>
    <dbReference type="NCBI Taxonomy" id="453591"/>
    <lineage>
        <taxon>Archaea</taxon>
        <taxon>Thermoproteota</taxon>
        <taxon>Thermoprotei</taxon>
        <taxon>Desulfurococcales</taxon>
        <taxon>Desulfurococcaceae</taxon>
        <taxon>Ignicoccus</taxon>
    </lineage>
</organism>
<dbReference type="EC" id="2.5.1.61" evidence="1"/>
<dbReference type="EMBL" id="CP000816">
    <property type="protein sequence ID" value="ABU81866.1"/>
    <property type="molecule type" value="Genomic_DNA"/>
</dbReference>
<dbReference type="RefSeq" id="WP_011998718.1">
    <property type="nucleotide sequence ID" value="NC_009776.1"/>
</dbReference>
<dbReference type="SMR" id="A8AAB4"/>
<dbReference type="STRING" id="453591.Igni_0684"/>
<dbReference type="GeneID" id="5562426"/>
<dbReference type="KEGG" id="iho:Igni_0684"/>
<dbReference type="eggNOG" id="arCOG04299">
    <property type="taxonomic scope" value="Archaea"/>
</dbReference>
<dbReference type="HOGENOM" id="CLU_019704_1_0_2"/>
<dbReference type="OrthoDB" id="8042at2157"/>
<dbReference type="PhylomeDB" id="A8AAB4"/>
<dbReference type="UniPathway" id="UPA00251">
    <property type="reaction ID" value="UER00319"/>
</dbReference>
<dbReference type="Proteomes" id="UP000000262">
    <property type="component" value="Chromosome"/>
</dbReference>
<dbReference type="GO" id="GO:0005737">
    <property type="term" value="C:cytoplasm"/>
    <property type="evidence" value="ECO:0007669"/>
    <property type="project" value="TreeGrafter"/>
</dbReference>
<dbReference type="GO" id="GO:0004418">
    <property type="term" value="F:hydroxymethylbilane synthase activity"/>
    <property type="evidence" value="ECO:0007669"/>
    <property type="project" value="UniProtKB-UniRule"/>
</dbReference>
<dbReference type="GO" id="GO:0006782">
    <property type="term" value="P:protoporphyrinogen IX biosynthetic process"/>
    <property type="evidence" value="ECO:0007669"/>
    <property type="project" value="UniProtKB-UniRule"/>
</dbReference>
<dbReference type="FunFam" id="3.40.190.10:FF:000005">
    <property type="entry name" value="Porphobilinogen deaminase"/>
    <property type="match status" value="1"/>
</dbReference>
<dbReference type="Gene3D" id="3.40.190.10">
    <property type="entry name" value="Periplasmic binding protein-like II"/>
    <property type="match status" value="2"/>
</dbReference>
<dbReference type="Gene3D" id="3.30.160.40">
    <property type="entry name" value="Porphobilinogen deaminase, C-terminal domain"/>
    <property type="match status" value="1"/>
</dbReference>
<dbReference type="HAMAP" id="MF_00260">
    <property type="entry name" value="Porphobil_deam"/>
    <property type="match status" value="1"/>
</dbReference>
<dbReference type="InterPro" id="IPR000860">
    <property type="entry name" value="HemC"/>
</dbReference>
<dbReference type="InterPro" id="IPR022419">
    <property type="entry name" value="Porphobilin_deaminase_cofac_BS"/>
</dbReference>
<dbReference type="InterPro" id="IPR022417">
    <property type="entry name" value="Porphobilin_deaminase_N"/>
</dbReference>
<dbReference type="InterPro" id="IPR022418">
    <property type="entry name" value="Porphobilinogen_deaminase_C"/>
</dbReference>
<dbReference type="InterPro" id="IPR036803">
    <property type="entry name" value="Porphobilinogen_deaminase_C_sf"/>
</dbReference>
<dbReference type="NCBIfam" id="TIGR00212">
    <property type="entry name" value="hemC"/>
    <property type="match status" value="1"/>
</dbReference>
<dbReference type="PANTHER" id="PTHR11557">
    <property type="entry name" value="PORPHOBILINOGEN DEAMINASE"/>
    <property type="match status" value="1"/>
</dbReference>
<dbReference type="PANTHER" id="PTHR11557:SF0">
    <property type="entry name" value="PORPHOBILINOGEN DEAMINASE"/>
    <property type="match status" value="1"/>
</dbReference>
<dbReference type="Pfam" id="PF01379">
    <property type="entry name" value="Porphobil_deam"/>
    <property type="match status" value="1"/>
</dbReference>
<dbReference type="Pfam" id="PF03900">
    <property type="entry name" value="Porphobil_deamC"/>
    <property type="match status" value="1"/>
</dbReference>
<dbReference type="PIRSF" id="PIRSF001438">
    <property type="entry name" value="4pyrrol_synth_OHMeBilane_synth"/>
    <property type="match status" value="1"/>
</dbReference>
<dbReference type="PRINTS" id="PR00151">
    <property type="entry name" value="PORPHBDMNASE"/>
</dbReference>
<dbReference type="SUPFAM" id="SSF53850">
    <property type="entry name" value="Periplasmic binding protein-like II"/>
    <property type="match status" value="1"/>
</dbReference>
<dbReference type="SUPFAM" id="SSF54782">
    <property type="entry name" value="Porphobilinogen deaminase (hydroxymethylbilane synthase), C-terminal domain"/>
    <property type="match status" value="1"/>
</dbReference>
<dbReference type="PROSITE" id="PS00533">
    <property type="entry name" value="PORPHOBILINOGEN_DEAM"/>
    <property type="match status" value="1"/>
</dbReference>
<feature type="chain" id="PRO_1000047750" description="Probable porphobilinogen deaminase">
    <location>
        <begin position="1"/>
        <end position="304"/>
    </location>
</feature>
<feature type="modified residue" description="S-(dipyrrolylmethanemethyl)cysteine" evidence="1">
    <location>
        <position position="240"/>
    </location>
</feature>
<proteinExistence type="inferred from homology"/>
<accession>A8AAB4</accession>
<protein>
    <recommendedName>
        <fullName evidence="1">Probable porphobilinogen deaminase</fullName>
        <shortName evidence="1">PBG</shortName>
        <ecNumber evidence="1">2.5.1.61</ecNumber>
    </recommendedName>
    <alternativeName>
        <fullName evidence="1">Hydroxymethylbilane synthase</fullName>
        <shortName evidence="1">HMBS</shortName>
    </alternativeName>
    <alternativeName>
        <fullName evidence="1">Pre-uroporphyrinogen synthase</fullName>
    </alternativeName>
</protein>
<name>HEM3_IGNH4</name>
<sequence length="304" mass="33281">MKIKIAARGSKLSLKQVSMFTSYLLKFFPDLEYEVITVKTTGDKANAPFEELAKRGLTGLFEKEVNKAVLEGKADVAVHSLKDLPTELDPRLEIAAFLPRDPPYDVLISRAGNYDIFDLPKGSVVGTSSARRKALIKNLRPDLVVKDLRGNVDTRLEKLRRGEYDAIVLAEAGVSRLGLNVDYVRLDWRLFPPSPGQGIIVAVTRKGSEISDLLKSISDVKSEKLATAERTVLKEFGGGCFVALGAIAFEEGSLIRLRATVLSPSGRERVDVELIGKGPEEVGMRAAERLKALNPMKTTVGSEE</sequence>
<keyword id="KW-0627">Porphyrin biosynthesis</keyword>
<keyword id="KW-1185">Reference proteome</keyword>
<keyword id="KW-0808">Transferase</keyword>